<sequence>MELEFLGTCSGQPSKLRNVSSLALKLLDELNEIWLFDCGEATQHQILRTNIRLRKITKIFISHNHGDHIFGLPGLLSTRSFQGDVGPLTIYGPAGIEQFVKTSLRISKTKISYPIKFVTLEEGGKIVSERGFEVYTEKLDHRIDSWGFRMVEADKAGELLMDKLAEFKVPNGPLLGKLKRGEQVELADGTVLNGKDFLGPAKKGRVVTVIYDTRSTPSIRRLADHADVLVHEATFDASEGKLARDYYHSTCTQAAETASACHVGHLYLTHVSARYVGSLASQMVKQAREIFPATTLAKDLDKFVVPMKG</sequence>
<gene>
    <name evidence="1" type="primary">rnz</name>
    <name type="ordered locus">LBUL_0749</name>
</gene>
<name>RNZ_LACDB</name>
<feature type="chain" id="PRO_1000070287" description="Ribonuclease Z">
    <location>
        <begin position="1"/>
        <end position="309"/>
    </location>
</feature>
<feature type="active site" description="Proton acceptor" evidence="1">
    <location>
        <position position="67"/>
    </location>
</feature>
<feature type="binding site" evidence="1">
    <location>
        <position position="63"/>
    </location>
    <ligand>
        <name>Zn(2+)</name>
        <dbReference type="ChEBI" id="CHEBI:29105"/>
        <label>1</label>
        <note>catalytic</note>
    </ligand>
</feature>
<feature type="binding site" evidence="1">
    <location>
        <position position="65"/>
    </location>
    <ligand>
        <name>Zn(2+)</name>
        <dbReference type="ChEBI" id="CHEBI:29105"/>
        <label>1</label>
        <note>catalytic</note>
    </ligand>
</feature>
<feature type="binding site" evidence="1">
    <location>
        <position position="67"/>
    </location>
    <ligand>
        <name>Zn(2+)</name>
        <dbReference type="ChEBI" id="CHEBI:29105"/>
        <label>2</label>
        <note>catalytic</note>
    </ligand>
</feature>
<feature type="binding site" evidence="1">
    <location>
        <position position="68"/>
    </location>
    <ligand>
        <name>Zn(2+)</name>
        <dbReference type="ChEBI" id="CHEBI:29105"/>
        <label>2</label>
        <note>catalytic</note>
    </ligand>
</feature>
<feature type="binding site" evidence="1">
    <location>
        <position position="141"/>
    </location>
    <ligand>
        <name>Zn(2+)</name>
        <dbReference type="ChEBI" id="CHEBI:29105"/>
        <label>1</label>
        <note>catalytic</note>
    </ligand>
</feature>
<feature type="binding site" evidence="1">
    <location>
        <position position="212"/>
    </location>
    <ligand>
        <name>Zn(2+)</name>
        <dbReference type="ChEBI" id="CHEBI:29105"/>
        <label>1</label>
        <note>catalytic</note>
    </ligand>
</feature>
<feature type="binding site" evidence="1">
    <location>
        <position position="212"/>
    </location>
    <ligand>
        <name>Zn(2+)</name>
        <dbReference type="ChEBI" id="CHEBI:29105"/>
        <label>2</label>
        <note>catalytic</note>
    </ligand>
</feature>
<feature type="binding site" evidence="1">
    <location>
        <position position="270"/>
    </location>
    <ligand>
        <name>Zn(2+)</name>
        <dbReference type="ChEBI" id="CHEBI:29105"/>
        <label>2</label>
        <note>catalytic</note>
    </ligand>
</feature>
<dbReference type="EC" id="3.1.26.11" evidence="1"/>
<dbReference type="EMBL" id="CP000412">
    <property type="protein sequence ID" value="ABJ58363.1"/>
    <property type="molecule type" value="Genomic_DNA"/>
</dbReference>
<dbReference type="RefSeq" id="WP_003619785.1">
    <property type="nucleotide sequence ID" value="NC_008529.1"/>
</dbReference>
<dbReference type="SMR" id="Q04B09"/>
<dbReference type="KEGG" id="lbu:LBUL_0749"/>
<dbReference type="HOGENOM" id="CLU_031317_2_0_9"/>
<dbReference type="BioCyc" id="LDEL321956:LBUL_RS03570-MONOMER"/>
<dbReference type="GO" id="GO:0042781">
    <property type="term" value="F:3'-tRNA processing endoribonuclease activity"/>
    <property type="evidence" value="ECO:0007669"/>
    <property type="project" value="UniProtKB-UniRule"/>
</dbReference>
<dbReference type="GO" id="GO:0008270">
    <property type="term" value="F:zinc ion binding"/>
    <property type="evidence" value="ECO:0007669"/>
    <property type="project" value="UniProtKB-UniRule"/>
</dbReference>
<dbReference type="CDD" id="cd07717">
    <property type="entry name" value="RNaseZ_ZiPD-like_MBL-fold"/>
    <property type="match status" value="1"/>
</dbReference>
<dbReference type="FunFam" id="3.60.15.10:FF:000002">
    <property type="entry name" value="Ribonuclease Z"/>
    <property type="match status" value="1"/>
</dbReference>
<dbReference type="Gene3D" id="3.60.15.10">
    <property type="entry name" value="Ribonuclease Z/Hydroxyacylglutathione hydrolase-like"/>
    <property type="match status" value="1"/>
</dbReference>
<dbReference type="HAMAP" id="MF_01818">
    <property type="entry name" value="RNase_Z_BN"/>
    <property type="match status" value="1"/>
</dbReference>
<dbReference type="InterPro" id="IPR001279">
    <property type="entry name" value="Metallo-B-lactamas"/>
</dbReference>
<dbReference type="InterPro" id="IPR036866">
    <property type="entry name" value="RibonucZ/Hydroxyglut_hydro"/>
</dbReference>
<dbReference type="InterPro" id="IPR013471">
    <property type="entry name" value="RNase_Z/BN"/>
</dbReference>
<dbReference type="NCBIfam" id="NF000801">
    <property type="entry name" value="PRK00055.1-3"/>
    <property type="match status" value="1"/>
</dbReference>
<dbReference type="NCBIfam" id="TIGR02651">
    <property type="entry name" value="RNase_Z"/>
    <property type="match status" value="1"/>
</dbReference>
<dbReference type="PANTHER" id="PTHR46018">
    <property type="entry name" value="ZINC PHOSPHODIESTERASE ELAC PROTEIN 1"/>
    <property type="match status" value="1"/>
</dbReference>
<dbReference type="PANTHER" id="PTHR46018:SF2">
    <property type="entry name" value="ZINC PHOSPHODIESTERASE ELAC PROTEIN 1"/>
    <property type="match status" value="1"/>
</dbReference>
<dbReference type="Pfam" id="PF00753">
    <property type="entry name" value="Lactamase_B"/>
    <property type="match status" value="1"/>
</dbReference>
<dbReference type="SUPFAM" id="SSF56281">
    <property type="entry name" value="Metallo-hydrolase/oxidoreductase"/>
    <property type="match status" value="1"/>
</dbReference>
<proteinExistence type="inferred from homology"/>
<comment type="function">
    <text evidence="1">Zinc phosphodiesterase, which displays some tRNA 3'-processing endonuclease activity. Probably involved in tRNA maturation, by removing a 3'-trailer from precursor tRNA.</text>
</comment>
<comment type="catalytic activity">
    <reaction evidence="1">
        <text>Endonucleolytic cleavage of RNA, removing extra 3' nucleotides from tRNA precursor, generating 3' termini of tRNAs. A 3'-hydroxy group is left at the tRNA terminus and a 5'-phosphoryl group is left at the trailer molecule.</text>
        <dbReference type="EC" id="3.1.26.11"/>
    </reaction>
</comment>
<comment type="cofactor">
    <cofactor evidence="1">
        <name>Zn(2+)</name>
        <dbReference type="ChEBI" id="CHEBI:29105"/>
    </cofactor>
    <text evidence="1">Binds 2 Zn(2+) ions.</text>
</comment>
<comment type="subunit">
    <text evidence="1">Homodimer.</text>
</comment>
<comment type="similarity">
    <text evidence="1">Belongs to the RNase Z family.</text>
</comment>
<reference key="1">
    <citation type="journal article" date="2006" name="Proc. Natl. Acad. Sci. U.S.A.">
        <title>Comparative genomics of the lactic acid bacteria.</title>
        <authorList>
            <person name="Makarova K.S."/>
            <person name="Slesarev A."/>
            <person name="Wolf Y.I."/>
            <person name="Sorokin A."/>
            <person name="Mirkin B."/>
            <person name="Koonin E.V."/>
            <person name="Pavlov A."/>
            <person name="Pavlova N."/>
            <person name="Karamychev V."/>
            <person name="Polouchine N."/>
            <person name="Shakhova V."/>
            <person name="Grigoriev I."/>
            <person name="Lou Y."/>
            <person name="Rohksar D."/>
            <person name="Lucas S."/>
            <person name="Huang K."/>
            <person name="Goodstein D.M."/>
            <person name="Hawkins T."/>
            <person name="Plengvidhya V."/>
            <person name="Welker D."/>
            <person name="Hughes J."/>
            <person name="Goh Y."/>
            <person name="Benson A."/>
            <person name="Baldwin K."/>
            <person name="Lee J.-H."/>
            <person name="Diaz-Muniz I."/>
            <person name="Dosti B."/>
            <person name="Smeianov V."/>
            <person name="Wechter W."/>
            <person name="Barabote R."/>
            <person name="Lorca G."/>
            <person name="Altermann E."/>
            <person name="Barrangou R."/>
            <person name="Ganesan B."/>
            <person name="Xie Y."/>
            <person name="Rawsthorne H."/>
            <person name="Tamir D."/>
            <person name="Parker C."/>
            <person name="Breidt F."/>
            <person name="Broadbent J.R."/>
            <person name="Hutkins R."/>
            <person name="O'Sullivan D."/>
            <person name="Steele J."/>
            <person name="Unlu G."/>
            <person name="Saier M.H. Jr."/>
            <person name="Klaenhammer T."/>
            <person name="Richardson P."/>
            <person name="Kozyavkin S."/>
            <person name="Weimer B.C."/>
            <person name="Mills D.A."/>
        </authorList>
    </citation>
    <scope>NUCLEOTIDE SEQUENCE [LARGE SCALE GENOMIC DNA]</scope>
    <source>
        <strain>ATCC BAA-365 / Lb-18</strain>
    </source>
</reference>
<evidence type="ECO:0000255" key="1">
    <source>
        <dbReference type="HAMAP-Rule" id="MF_01818"/>
    </source>
</evidence>
<keyword id="KW-0255">Endonuclease</keyword>
<keyword id="KW-0378">Hydrolase</keyword>
<keyword id="KW-0479">Metal-binding</keyword>
<keyword id="KW-0540">Nuclease</keyword>
<keyword id="KW-0819">tRNA processing</keyword>
<keyword id="KW-0862">Zinc</keyword>
<organism>
    <name type="scientific">Lactobacillus delbrueckii subsp. bulgaricus (strain ATCC BAA-365 / Lb-18)</name>
    <dbReference type="NCBI Taxonomy" id="321956"/>
    <lineage>
        <taxon>Bacteria</taxon>
        <taxon>Bacillati</taxon>
        <taxon>Bacillota</taxon>
        <taxon>Bacilli</taxon>
        <taxon>Lactobacillales</taxon>
        <taxon>Lactobacillaceae</taxon>
        <taxon>Lactobacillus</taxon>
    </lineage>
</organism>
<accession>Q04B09</accession>
<protein>
    <recommendedName>
        <fullName evidence="1">Ribonuclease Z</fullName>
        <shortName evidence="1">RNase Z</shortName>
        <ecNumber evidence="1">3.1.26.11</ecNumber>
    </recommendedName>
    <alternativeName>
        <fullName evidence="1">tRNA 3 endonuclease</fullName>
    </alternativeName>
    <alternativeName>
        <fullName evidence="1">tRNase Z</fullName>
    </alternativeName>
</protein>